<dbReference type="EC" id="3.5.1.88" evidence="1"/>
<dbReference type="EMBL" id="AE006470">
    <property type="protein sequence ID" value="AAM72682.1"/>
    <property type="molecule type" value="Genomic_DNA"/>
</dbReference>
<dbReference type="RefSeq" id="NP_662340.1">
    <property type="nucleotide sequence ID" value="NC_002932.3"/>
</dbReference>
<dbReference type="RefSeq" id="WP_010933121.1">
    <property type="nucleotide sequence ID" value="NC_002932.3"/>
</dbReference>
<dbReference type="SMR" id="Q8KCG7"/>
<dbReference type="STRING" id="194439.CT1454"/>
<dbReference type="EnsemblBacteria" id="AAM72682">
    <property type="protein sequence ID" value="AAM72682"/>
    <property type="gene ID" value="CT1454"/>
</dbReference>
<dbReference type="KEGG" id="cte:CT1454"/>
<dbReference type="PATRIC" id="fig|194439.7.peg.1319"/>
<dbReference type="eggNOG" id="COG0242">
    <property type="taxonomic scope" value="Bacteria"/>
</dbReference>
<dbReference type="HOGENOM" id="CLU_061901_2_0_10"/>
<dbReference type="OrthoDB" id="9784988at2"/>
<dbReference type="Proteomes" id="UP000001007">
    <property type="component" value="Chromosome"/>
</dbReference>
<dbReference type="GO" id="GO:0046872">
    <property type="term" value="F:metal ion binding"/>
    <property type="evidence" value="ECO:0007669"/>
    <property type="project" value="UniProtKB-KW"/>
</dbReference>
<dbReference type="GO" id="GO:0042586">
    <property type="term" value="F:peptide deformylase activity"/>
    <property type="evidence" value="ECO:0007669"/>
    <property type="project" value="UniProtKB-UniRule"/>
</dbReference>
<dbReference type="GO" id="GO:0043686">
    <property type="term" value="P:co-translational protein modification"/>
    <property type="evidence" value="ECO:0007669"/>
    <property type="project" value="TreeGrafter"/>
</dbReference>
<dbReference type="GO" id="GO:0006412">
    <property type="term" value="P:translation"/>
    <property type="evidence" value="ECO:0007669"/>
    <property type="project" value="UniProtKB-UniRule"/>
</dbReference>
<dbReference type="CDD" id="cd00487">
    <property type="entry name" value="Pep_deformylase"/>
    <property type="match status" value="1"/>
</dbReference>
<dbReference type="Gene3D" id="3.90.45.10">
    <property type="entry name" value="Peptide deformylase"/>
    <property type="match status" value="1"/>
</dbReference>
<dbReference type="HAMAP" id="MF_00163">
    <property type="entry name" value="Pep_deformylase"/>
    <property type="match status" value="1"/>
</dbReference>
<dbReference type="InterPro" id="IPR023635">
    <property type="entry name" value="Peptide_deformylase"/>
</dbReference>
<dbReference type="InterPro" id="IPR036821">
    <property type="entry name" value="Peptide_deformylase_sf"/>
</dbReference>
<dbReference type="NCBIfam" id="TIGR00079">
    <property type="entry name" value="pept_deformyl"/>
    <property type="match status" value="1"/>
</dbReference>
<dbReference type="NCBIfam" id="NF001159">
    <property type="entry name" value="PRK00150.1-3"/>
    <property type="match status" value="1"/>
</dbReference>
<dbReference type="PANTHER" id="PTHR10458">
    <property type="entry name" value="PEPTIDE DEFORMYLASE"/>
    <property type="match status" value="1"/>
</dbReference>
<dbReference type="PANTHER" id="PTHR10458:SF22">
    <property type="entry name" value="PEPTIDE DEFORMYLASE"/>
    <property type="match status" value="1"/>
</dbReference>
<dbReference type="Pfam" id="PF01327">
    <property type="entry name" value="Pep_deformylase"/>
    <property type="match status" value="1"/>
</dbReference>
<dbReference type="PIRSF" id="PIRSF004749">
    <property type="entry name" value="Pep_def"/>
    <property type="match status" value="1"/>
</dbReference>
<dbReference type="PRINTS" id="PR01576">
    <property type="entry name" value="PDEFORMYLASE"/>
</dbReference>
<dbReference type="SUPFAM" id="SSF56420">
    <property type="entry name" value="Peptide deformylase"/>
    <property type="match status" value="1"/>
</dbReference>
<reference key="1">
    <citation type="journal article" date="2002" name="Proc. Natl. Acad. Sci. U.S.A.">
        <title>The complete genome sequence of Chlorobium tepidum TLS, a photosynthetic, anaerobic, green-sulfur bacterium.</title>
        <authorList>
            <person name="Eisen J.A."/>
            <person name="Nelson K.E."/>
            <person name="Paulsen I.T."/>
            <person name="Heidelberg J.F."/>
            <person name="Wu M."/>
            <person name="Dodson R.J."/>
            <person name="DeBoy R.T."/>
            <person name="Gwinn M.L."/>
            <person name="Nelson W.C."/>
            <person name="Haft D.H."/>
            <person name="Hickey E.K."/>
            <person name="Peterson J.D."/>
            <person name="Durkin A.S."/>
            <person name="Kolonay J.F."/>
            <person name="Yang F."/>
            <person name="Holt I.E."/>
            <person name="Umayam L.A."/>
            <person name="Mason T.M."/>
            <person name="Brenner M."/>
            <person name="Shea T.P."/>
            <person name="Parksey D.S."/>
            <person name="Nierman W.C."/>
            <person name="Feldblyum T.V."/>
            <person name="Hansen C.L."/>
            <person name="Craven M.B."/>
            <person name="Radune D."/>
            <person name="Vamathevan J.J."/>
            <person name="Khouri H.M."/>
            <person name="White O."/>
            <person name="Gruber T.M."/>
            <person name="Ketchum K.A."/>
            <person name="Venter J.C."/>
            <person name="Tettelin H."/>
            <person name="Bryant D.A."/>
            <person name="Fraser C.M."/>
        </authorList>
    </citation>
    <scope>NUCLEOTIDE SEQUENCE [LARGE SCALE GENOMIC DNA]</scope>
    <source>
        <strain>ATCC 49652 / DSM 12025 / NBRC 103806 / TLS</strain>
    </source>
</reference>
<accession>Q8KCG7</accession>
<name>DEF_CHLTE</name>
<organism>
    <name type="scientific">Chlorobaculum tepidum (strain ATCC 49652 / DSM 12025 / NBRC 103806 / TLS)</name>
    <name type="common">Chlorobium tepidum</name>
    <dbReference type="NCBI Taxonomy" id="194439"/>
    <lineage>
        <taxon>Bacteria</taxon>
        <taxon>Pseudomonadati</taxon>
        <taxon>Chlorobiota</taxon>
        <taxon>Chlorobiia</taxon>
        <taxon>Chlorobiales</taxon>
        <taxon>Chlorobiaceae</taxon>
        <taxon>Chlorobaculum</taxon>
    </lineage>
</organism>
<feature type="chain" id="PRO_0000082763" description="Peptide deformylase">
    <location>
        <begin position="1"/>
        <end position="187"/>
    </location>
</feature>
<feature type="active site" evidence="1">
    <location>
        <position position="137"/>
    </location>
</feature>
<feature type="binding site" evidence="1">
    <location>
        <position position="94"/>
    </location>
    <ligand>
        <name>Fe cation</name>
        <dbReference type="ChEBI" id="CHEBI:24875"/>
    </ligand>
</feature>
<feature type="binding site" evidence="1">
    <location>
        <position position="136"/>
    </location>
    <ligand>
        <name>Fe cation</name>
        <dbReference type="ChEBI" id="CHEBI:24875"/>
    </ligand>
</feature>
<feature type="binding site" evidence="1">
    <location>
        <position position="140"/>
    </location>
    <ligand>
        <name>Fe cation</name>
        <dbReference type="ChEBI" id="CHEBI:24875"/>
    </ligand>
</feature>
<keyword id="KW-0378">Hydrolase</keyword>
<keyword id="KW-0408">Iron</keyword>
<keyword id="KW-0479">Metal-binding</keyword>
<keyword id="KW-0648">Protein biosynthesis</keyword>
<keyword id="KW-1185">Reference proteome</keyword>
<protein>
    <recommendedName>
        <fullName evidence="1">Peptide deformylase</fullName>
        <shortName evidence="1">PDF</shortName>
        <ecNumber evidence="1">3.5.1.88</ecNumber>
    </recommendedName>
    <alternativeName>
        <fullName evidence="1">Polypeptide deformylase</fullName>
    </alternativeName>
</protein>
<evidence type="ECO:0000255" key="1">
    <source>
        <dbReference type="HAMAP-Rule" id="MF_00163"/>
    </source>
</evidence>
<proteinExistence type="inferred from homology"/>
<comment type="function">
    <text evidence="1">Removes the formyl group from the N-terminal Met of newly synthesized proteins. Requires at least a dipeptide for an efficient rate of reaction. N-terminal L-methionine is a prerequisite for activity but the enzyme has broad specificity at other positions.</text>
</comment>
<comment type="catalytic activity">
    <reaction evidence="1">
        <text>N-terminal N-formyl-L-methionyl-[peptide] + H2O = N-terminal L-methionyl-[peptide] + formate</text>
        <dbReference type="Rhea" id="RHEA:24420"/>
        <dbReference type="Rhea" id="RHEA-COMP:10639"/>
        <dbReference type="Rhea" id="RHEA-COMP:10640"/>
        <dbReference type="ChEBI" id="CHEBI:15377"/>
        <dbReference type="ChEBI" id="CHEBI:15740"/>
        <dbReference type="ChEBI" id="CHEBI:49298"/>
        <dbReference type="ChEBI" id="CHEBI:64731"/>
        <dbReference type="EC" id="3.5.1.88"/>
    </reaction>
</comment>
<comment type="cofactor">
    <cofactor evidence="1">
        <name>Fe(2+)</name>
        <dbReference type="ChEBI" id="CHEBI:29033"/>
    </cofactor>
    <text evidence="1">Binds 1 Fe(2+) ion.</text>
</comment>
<comment type="similarity">
    <text evidence="1">Belongs to the polypeptide deformylase family.</text>
</comment>
<gene>
    <name evidence="1" type="primary">def</name>
    <name type="ordered locus">CT1454</name>
</gene>
<sequence>MILPINTYSDPVLAMKAKPLKGVDSAIEELIAEMFDTMYKAPGIGLAAPQVGHSLRLVVVDISTIKEYADFKPMVVINPRIVAVRGRSLMEEGCLSVPGIAGNVVRPSAITLHYRDEKFEEHTADFHSMMARVLQHEIDHLDGTLFVDRMDKRDRRKIQKELDAIAEGRVKADYPLARDVNRVEAEA</sequence>